<sequence>MQKYEKLEKIGEGTYGTVFKGRNRETLEIVALKRVRLDEDDEGVPSSALREICLLKELKHKNIVRLYDVLHSEKKLTLVFEHCDQDLKKYFDSLNGDIDMAVCRSFMLQLLRGLAFCHSHNVLHRDLKPQNLLINKNGELKLADFGLARAFGIPVKCYSAEVVTLWYRPPDVLFGAKLYTTSIDMWSAGCIFAELADAGRPLFPGSDVLDQLMKIFRVLGTPTEESWPGVTHLSDYVALPHFPAITSWSQIVPRLSSKGRDLLQKLLVCRPNQRVSAEQAMQHPYFTDSSNH</sequence>
<comment type="function">
    <text evidence="1">Probably involved in the control of the cell cycle. Interacts with D1 and D3-type G1 cyclins. Possible regulator of neuronal differentiation and/or development (By similarity).</text>
</comment>
<comment type="catalytic activity">
    <reaction>
        <text>L-seryl-[protein] + ATP = O-phospho-L-seryl-[protein] + ADP + H(+)</text>
        <dbReference type="Rhea" id="RHEA:17989"/>
        <dbReference type="Rhea" id="RHEA-COMP:9863"/>
        <dbReference type="Rhea" id="RHEA-COMP:11604"/>
        <dbReference type="ChEBI" id="CHEBI:15378"/>
        <dbReference type="ChEBI" id="CHEBI:29999"/>
        <dbReference type="ChEBI" id="CHEBI:30616"/>
        <dbReference type="ChEBI" id="CHEBI:83421"/>
        <dbReference type="ChEBI" id="CHEBI:456216"/>
        <dbReference type="EC" id="2.7.11.22"/>
    </reaction>
</comment>
<comment type="catalytic activity">
    <reaction>
        <text>L-threonyl-[protein] + ATP = O-phospho-L-threonyl-[protein] + ADP + H(+)</text>
        <dbReference type="Rhea" id="RHEA:46608"/>
        <dbReference type="Rhea" id="RHEA-COMP:11060"/>
        <dbReference type="Rhea" id="RHEA-COMP:11605"/>
        <dbReference type="ChEBI" id="CHEBI:15378"/>
        <dbReference type="ChEBI" id="CHEBI:30013"/>
        <dbReference type="ChEBI" id="CHEBI:30616"/>
        <dbReference type="ChEBI" id="CHEBI:61977"/>
        <dbReference type="ChEBI" id="CHEBI:456216"/>
        <dbReference type="EC" id="2.7.11.22"/>
    </reaction>
</comment>
<comment type="similarity">
    <text evidence="4">Belongs to the protein kinase superfamily. CMGC Ser/Thr protein kinase family. CDC2/CDKX subfamily.</text>
</comment>
<reference key="1">
    <citation type="journal article" date="2006" name="Insect Mol. Biol.">
        <title>Analysis of fat body transcriptome from the adult tsetse fly, Glossina morsitans morsitans.</title>
        <authorList>
            <person name="Attardo G.M."/>
            <person name="Strickler-Dinglasan P."/>
            <person name="Perkin S.A.H."/>
            <person name="Caler E."/>
            <person name="Bonaldo M.F."/>
            <person name="Soares M.B."/>
            <person name="El-Sayeed N.M.A."/>
            <person name="Aksoy S."/>
        </authorList>
    </citation>
    <scope>NUCLEOTIDE SEQUENCE [LARGE SCALE MRNA]</scope>
    <source>
        <tissue>Fat body</tissue>
    </source>
</reference>
<protein>
    <recommendedName>
        <fullName>Cyclin-dependent kinase 5 homolog</fullName>
        <ecNumber>2.7.11.22</ecNumber>
    </recommendedName>
    <alternativeName>
        <fullName>Cell division protein kinase 5</fullName>
    </alternativeName>
</protein>
<name>CDK5_GLOMM</name>
<organism>
    <name type="scientific">Glossina morsitans morsitans</name>
    <name type="common">Savannah tsetse fly</name>
    <dbReference type="NCBI Taxonomy" id="37546"/>
    <lineage>
        <taxon>Eukaryota</taxon>
        <taxon>Metazoa</taxon>
        <taxon>Ecdysozoa</taxon>
        <taxon>Arthropoda</taxon>
        <taxon>Hexapoda</taxon>
        <taxon>Insecta</taxon>
        <taxon>Pterygota</taxon>
        <taxon>Neoptera</taxon>
        <taxon>Endopterygota</taxon>
        <taxon>Diptera</taxon>
        <taxon>Brachycera</taxon>
        <taxon>Muscomorpha</taxon>
        <taxon>Hippoboscoidea</taxon>
        <taxon>Glossinidae</taxon>
        <taxon>Glossina</taxon>
    </lineage>
</organism>
<accession>Q2PQN9</accession>
<gene>
    <name type="primary">Cdk5</name>
</gene>
<keyword id="KW-0067">ATP-binding</keyword>
<keyword id="KW-0131">Cell cycle</keyword>
<keyword id="KW-0132">Cell division</keyword>
<keyword id="KW-0418">Kinase</keyword>
<keyword id="KW-0547">Nucleotide-binding</keyword>
<keyword id="KW-0597">Phosphoprotein</keyword>
<keyword id="KW-0723">Serine/threonine-protein kinase</keyword>
<keyword id="KW-0808">Transferase</keyword>
<evidence type="ECO:0000250" key="1"/>
<evidence type="ECO:0000255" key="2">
    <source>
        <dbReference type="PROSITE-ProRule" id="PRU00159"/>
    </source>
</evidence>
<evidence type="ECO:0000255" key="3">
    <source>
        <dbReference type="PROSITE-ProRule" id="PRU10027"/>
    </source>
</evidence>
<evidence type="ECO:0000305" key="4"/>
<feature type="chain" id="PRO_0000291621" description="Cyclin-dependent kinase 5 homolog">
    <location>
        <begin position="1"/>
        <end position="292"/>
    </location>
</feature>
<feature type="domain" description="Protein kinase" evidence="2">
    <location>
        <begin position="4"/>
        <end position="286"/>
    </location>
</feature>
<feature type="active site" description="Proton acceptor" evidence="2 3">
    <location>
        <position position="126"/>
    </location>
</feature>
<feature type="binding site" evidence="2">
    <location>
        <begin position="10"/>
        <end position="18"/>
    </location>
    <ligand>
        <name>ATP</name>
        <dbReference type="ChEBI" id="CHEBI:30616"/>
    </ligand>
</feature>
<feature type="binding site" evidence="2">
    <location>
        <position position="33"/>
    </location>
    <ligand>
        <name>ATP</name>
        <dbReference type="ChEBI" id="CHEBI:30616"/>
    </ligand>
</feature>
<feature type="modified residue" description="Phosphothreonine" evidence="1">
    <location>
        <position position="14"/>
    </location>
</feature>
<feature type="modified residue" description="Phosphotyrosine" evidence="1">
    <location>
        <position position="15"/>
    </location>
</feature>
<feature type="modified residue" description="Phosphoserine" evidence="1">
    <location>
        <position position="159"/>
    </location>
</feature>
<proteinExistence type="evidence at transcript level"/>
<dbReference type="EC" id="2.7.11.22"/>
<dbReference type="EMBL" id="DQ307184">
    <property type="protein sequence ID" value="ABC25084.1"/>
    <property type="molecule type" value="mRNA"/>
</dbReference>
<dbReference type="SMR" id="Q2PQN9"/>
<dbReference type="STRING" id="37546.Q2PQN9"/>
<dbReference type="EnsemblMetazoa" id="GMOY000139-RA">
    <property type="protein sequence ID" value="GMOY000139-PA"/>
    <property type="gene ID" value="GMOY000139"/>
</dbReference>
<dbReference type="VEuPathDB" id="VectorBase:GMOY000139"/>
<dbReference type="Proteomes" id="UP000092444">
    <property type="component" value="Unassembled WGS sequence"/>
</dbReference>
<dbReference type="GO" id="GO:0005737">
    <property type="term" value="C:cytoplasm"/>
    <property type="evidence" value="ECO:0007669"/>
    <property type="project" value="TreeGrafter"/>
</dbReference>
<dbReference type="GO" id="GO:0005634">
    <property type="term" value="C:nucleus"/>
    <property type="evidence" value="ECO:0007669"/>
    <property type="project" value="TreeGrafter"/>
</dbReference>
<dbReference type="GO" id="GO:0005524">
    <property type="term" value="F:ATP binding"/>
    <property type="evidence" value="ECO:0007669"/>
    <property type="project" value="UniProtKB-KW"/>
</dbReference>
<dbReference type="GO" id="GO:0004693">
    <property type="term" value="F:cyclin-dependent protein serine/threonine kinase activity"/>
    <property type="evidence" value="ECO:0007669"/>
    <property type="project" value="UniProtKB-EC"/>
</dbReference>
<dbReference type="GO" id="GO:0106310">
    <property type="term" value="F:protein serine kinase activity"/>
    <property type="evidence" value="ECO:0007669"/>
    <property type="project" value="RHEA"/>
</dbReference>
<dbReference type="GO" id="GO:0007409">
    <property type="term" value="P:axonogenesis"/>
    <property type="evidence" value="ECO:0007669"/>
    <property type="project" value="TreeGrafter"/>
</dbReference>
<dbReference type="GO" id="GO:0051301">
    <property type="term" value="P:cell division"/>
    <property type="evidence" value="ECO:0007669"/>
    <property type="project" value="UniProtKB-KW"/>
</dbReference>
<dbReference type="GO" id="GO:0051402">
    <property type="term" value="P:neuron apoptotic process"/>
    <property type="evidence" value="ECO:0007669"/>
    <property type="project" value="TreeGrafter"/>
</dbReference>
<dbReference type="GO" id="GO:0048489">
    <property type="term" value="P:synaptic vesicle transport"/>
    <property type="evidence" value="ECO:0007669"/>
    <property type="project" value="TreeGrafter"/>
</dbReference>
<dbReference type="CDD" id="cd07839">
    <property type="entry name" value="STKc_CDK5"/>
    <property type="match status" value="1"/>
</dbReference>
<dbReference type="FunFam" id="3.30.200.20:FF:000144">
    <property type="entry name" value="Cyclin-dependent kinase 5"/>
    <property type="match status" value="1"/>
</dbReference>
<dbReference type="FunFam" id="1.10.510.10:FF:000184">
    <property type="entry name" value="cyclin-dependent kinase 5 homolog"/>
    <property type="match status" value="1"/>
</dbReference>
<dbReference type="Gene3D" id="3.30.200.20">
    <property type="entry name" value="Phosphorylase Kinase, domain 1"/>
    <property type="match status" value="1"/>
</dbReference>
<dbReference type="Gene3D" id="1.10.510.10">
    <property type="entry name" value="Transferase(Phosphotransferase) domain 1"/>
    <property type="match status" value="1"/>
</dbReference>
<dbReference type="InterPro" id="IPR050108">
    <property type="entry name" value="CDK"/>
</dbReference>
<dbReference type="InterPro" id="IPR011009">
    <property type="entry name" value="Kinase-like_dom_sf"/>
</dbReference>
<dbReference type="InterPro" id="IPR000719">
    <property type="entry name" value="Prot_kinase_dom"/>
</dbReference>
<dbReference type="InterPro" id="IPR017441">
    <property type="entry name" value="Protein_kinase_ATP_BS"/>
</dbReference>
<dbReference type="InterPro" id="IPR008271">
    <property type="entry name" value="Ser/Thr_kinase_AS"/>
</dbReference>
<dbReference type="PANTHER" id="PTHR24056">
    <property type="entry name" value="CELL DIVISION PROTEIN KINASE"/>
    <property type="match status" value="1"/>
</dbReference>
<dbReference type="PANTHER" id="PTHR24056:SF46">
    <property type="entry name" value="CYCLIN-DEPENDENT KINASE 5"/>
    <property type="match status" value="1"/>
</dbReference>
<dbReference type="Pfam" id="PF00069">
    <property type="entry name" value="Pkinase"/>
    <property type="match status" value="1"/>
</dbReference>
<dbReference type="SMART" id="SM00220">
    <property type="entry name" value="S_TKc"/>
    <property type="match status" value="1"/>
</dbReference>
<dbReference type="SUPFAM" id="SSF56112">
    <property type="entry name" value="Protein kinase-like (PK-like)"/>
    <property type="match status" value="1"/>
</dbReference>
<dbReference type="PROSITE" id="PS00107">
    <property type="entry name" value="PROTEIN_KINASE_ATP"/>
    <property type="match status" value="1"/>
</dbReference>
<dbReference type="PROSITE" id="PS50011">
    <property type="entry name" value="PROTEIN_KINASE_DOM"/>
    <property type="match status" value="1"/>
</dbReference>
<dbReference type="PROSITE" id="PS00108">
    <property type="entry name" value="PROTEIN_KINASE_ST"/>
    <property type="match status" value="1"/>
</dbReference>